<sequence>MQTSLLKPKIIAVESLGENHARVVMEPFERGYGHTLGNALRRVLLSSMVGYAPTEVTIAGVVHEYSTLDGVQEDVVNLLLNLKGVVFKLHNRDEVTVTLRKEGEGVVTAGDIELAHDCEVINPNHVIAHLSKGGKLDVQIKIEKGRGYVPGNVRRYGEDTAKIIGRIVLDASFSPVRRVSYAVESARVEQRTDLDKLVMNIETSGVITPEEAIRQSARILVDQLSVFAALEGTETAAEAPSRAPQIDPILLRPVDDLELTVRSANCLKAENIYYIGDLIQRTENELLKTPNLGRKSLNEIKEVLASRGLTLGMKLENWPPAGLDK</sequence>
<proteinExistence type="inferred from homology"/>
<accession>Q39KE1</accession>
<dbReference type="EC" id="2.7.7.6" evidence="1"/>
<dbReference type="EMBL" id="CP000151">
    <property type="protein sequence ID" value="ABB07075.1"/>
    <property type="molecule type" value="Genomic_DNA"/>
</dbReference>
<dbReference type="RefSeq" id="WP_006477176.1">
    <property type="nucleotide sequence ID" value="NZ_WNDV01000034.1"/>
</dbReference>
<dbReference type="SMR" id="Q39KE1"/>
<dbReference type="GeneID" id="98107134"/>
<dbReference type="KEGG" id="bur:Bcep18194_A3473"/>
<dbReference type="HOGENOM" id="CLU_053084_0_0_4"/>
<dbReference type="Proteomes" id="UP000002705">
    <property type="component" value="Chromosome 1"/>
</dbReference>
<dbReference type="GO" id="GO:0005737">
    <property type="term" value="C:cytoplasm"/>
    <property type="evidence" value="ECO:0007669"/>
    <property type="project" value="UniProtKB-ARBA"/>
</dbReference>
<dbReference type="GO" id="GO:0000428">
    <property type="term" value="C:DNA-directed RNA polymerase complex"/>
    <property type="evidence" value="ECO:0007669"/>
    <property type="project" value="UniProtKB-KW"/>
</dbReference>
<dbReference type="GO" id="GO:0003677">
    <property type="term" value="F:DNA binding"/>
    <property type="evidence" value="ECO:0007669"/>
    <property type="project" value="UniProtKB-UniRule"/>
</dbReference>
<dbReference type="GO" id="GO:0003899">
    <property type="term" value="F:DNA-directed RNA polymerase activity"/>
    <property type="evidence" value="ECO:0007669"/>
    <property type="project" value="UniProtKB-UniRule"/>
</dbReference>
<dbReference type="GO" id="GO:0046983">
    <property type="term" value="F:protein dimerization activity"/>
    <property type="evidence" value="ECO:0007669"/>
    <property type="project" value="InterPro"/>
</dbReference>
<dbReference type="GO" id="GO:0006351">
    <property type="term" value="P:DNA-templated transcription"/>
    <property type="evidence" value="ECO:0007669"/>
    <property type="project" value="UniProtKB-UniRule"/>
</dbReference>
<dbReference type="CDD" id="cd06928">
    <property type="entry name" value="RNAP_alpha_NTD"/>
    <property type="match status" value="1"/>
</dbReference>
<dbReference type="FunFam" id="1.10.150.20:FF:000001">
    <property type="entry name" value="DNA-directed RNA polymerase subunit alpha"/>
    <property type="match status" value="1"/>
</dbReference>
<dbReference type="FunFam" id="2.170.120.12:FF:000001">
    <property type="entry name" value="DNA-directed RNA polymerase subunit alpha"/>
    <property type="match status" value="1"/>
</dbReference>
<dbReference type="Gene3D" id="1.10.150.20">
    <property type="entry name" value="5' to 3' exonuclease, C-terminal subdomain"/>
    <property type="match status" value="1"/>
</dbReference>
<dbReference type="Gene3D" id="2.170.120.12">
    <property type="entry name" value="DNA-directed RNA polymerase, insert domain"/>
    <property type="match status" value="1"/>
</dbReference>
<dbReference type="Gene3D" id="3.30.1360.10">
    <property type="entry name" value="RNA polymerase, RBP11-like subunit"/>
    <property type="match status" value="1"/>
</dbReference>
<dbReference type="HAMAP" id="MF_00059">
    <property type="entry name" value="RNApol_bact_RpoA"/>
    <property type="match status" value="1"/>
</dbReference>
<dbReference type="InterPro" id="IPR011262">
    <property type="entry name" value="DNA-dir_RNA_pol_insert"/>
</dbReference>
<dbReference type="InterPro" id="IPR011263">
    <property type="entry name" value="DNA-dir_RNA_pol_RpoA/D/Rpb3"/>
</dbReference>
<dbReference type="InterPro" id="IPR011773">
    <property type="entry name" value="DNA-dir_RpoA"/>
</dbReference>
<dbReference type="InterPro" id="IPR036603">
    <property type="entry name" value="RBP11-like"/>
</dbReference>
<dbReference type="InterPro" id="IPR011260">
    <property type="entry name" value="RNAP_asu_C"/>
</dbReference>
<dbReference type="InterPro" id="IPR036643">
    <property type="entry name" value="RNApol_insert_sf"/>
</dbReference>
<dbReference type="NCBIfam" id="NF003513">
    <property type="entry name" value="PRK05182.1-2"/>
    <property type="match status" value="1"/>
</dbReference>
<dbReference type="NCBIfam" id="NF003519">
    <property type="entry name" value="PRK05182.2-5"/>
    <property type="match status" value="1"/>
</dbReference>
<dbReference type="NCBIfam" id="TIGR02027">
    <property type="entry name" value="rpoA"/>
    <property type="match status" value="1"/>
</dbReference>
<dbReference type="Pfam" id="PF01000">
    <property type="entry name" value="RNA_pol_A_bac"/>
    <property type="match status" value="1"/>
</dbReference>
<dbReference type="Pfam" id="PF03118">
    <property type="entry name" value="RNA_pol_A_CTD"/>
    <property type="match status" value="1"/>
</dbReference>
<dbReference type="Pfam" id="PF01193">
    <property type="entry name" value="RNA_pol_L"/>
    <property type="match status" value="1"/>
</dbReference>
<dbReference type="SMART" id="SM00662">
    <property type="entry name" value="RPOLD"/>
    <property type="match status" value="1"/>
</dbReference>
<dbReference type="SUPFAM" id="SSF47789">
    <property type="entry name" value="C-terminal domain of RNA polymerase alpha subunit"/>
    <property type="match status" value="1"/>
</dbReference>
<dbReference type="SUPFAM" id="SSF56553">
    <property type="entry name" value="Insert subdomain of RNA polymerase alpha subunit"/>
    <property type="match status" value="1"/>
</dbReference>
<dbReference type="SUPFAM" id="SSF55257">
    <property type="entry name" value="RBP11-like subunits of RNA polymerase"/>
    <property type="match status" value="1"/>
</dbReference>
<evidence type="ECO:0000255" key="1">
    <source>
        <dbReference type="HAMAP-Rule" id="MF_00059"/>
    </source>
</evidence>
<protein>
    <recommendedName>
        <fullName evidence="1">DNA-directed RNA polymerase subunit alpha</fullName>
        <shortName evidence="1">RNAP subunit alpha</shortName>
        <ecNumber evidence="1">2.7.7.6</ecNumber>
    </recommendedName>
    <alternativeName>
        <fullName evidence="1">RNA polymerase subunit alpha</fullName>
    </alternativeName>
    <alternativeName>
        <fullName evidence="1">Transcriptase subunit alpha</fullName>
    </alternativeName>
</protein>
<keyword id="KW-0240">DNA-directed RNA polymerase</keyword>
<keyword id="KW-0548">Nucleotidyltransferase</keyword>
<keyword id="KW-0804">Transcription</keyword>
<keyword id="KW-0808">Transferase</keyword>
<comment type="function">
    <text evidence="1">DNA-dependent RNA polymerase catalyzes the transcription of DNA into RNA using the four ribonucleoside triphosphates as substrates.</text>
</comment>
<comment type="catalytic activity">
    <reaction evidence="1">
        <text>RNA(n) + a ribonucleoside 5'-triphosphate = RNA(n+1) + diphosphate</text>
        <dbReference type="Rhea" id="RHEA:21248"/>
        <dbReference type="Rhea" id="RHEA-COMP:14527"/>
        <dbReference type="Rhea" id="RHEA-COMP:17342"/>
        <dbReference type="ChEBI" id="CHEBI:33019"/>
        <dbReference type="ChEBI" id="CHEBI:61557"/>
        <dbReference type="ChEBI" id="CHEBI:140395"/>
        <dbReference type="EC" id="2.7.7.6"/>
    </reaction>
</comment>
<comment type="subunit">
    <text evidence="1">Homodimer. The RNAP catalytic core consists of 2 alpha, 1 beta, 1 beta' and 1 omega subunit. When a sigma factor is associated with the core the holoenzyme is formed, which can initiate transcription.</text>
</comment>
<comment type="domain">
    <text evidence="1">The N-terminal domain is essential for RNAP assembly and basal transcription, whereas the C-terminal domain is involved in interaction with transcriptional regulators and with upstream promoter elements.</text>
</comment>
<comment type="similarity">
    <text evidence="1">Belongs to the RNA polymerase alpha chain family.</text>
</comment>
<reference key="1">
    <citation type="submission" date="2005-10" db="EMBL/GenBank/DDBJ databases">
        <title>Complete sequence of chromosome 1 of Burkholderia sp. 383.</title>
        <authorList>
            <consortium name="US DOE Joint Genome Institute"/>
            <person name="Copeland A."/>
            <person name="Lucas S."/>
            <person name="Lapidus A."/>
            <person name="Barry K."/>
            <person name="Detter J.C."/>
            <person name="Glavina T."/>
            <person name="Hammon N."/>
            <person name="Israni S."/>
            <person name="Pitluck S."/>
            <person name="Chain P."/>
            <person name="Malfatti S."/>
            <person name="Shin M."/>
            <person name="Vergez L."/>
            <person name="Schmutz J."/>
            <person name="Larimer F."/>
            <person name="Land M."/>
            <person name="Kyrpides N."/>
            <person name="Lykidis A."/>
            <person name="Richardson P."/>
        </authorList>
    </citation>
    <scope>NUCLEOTIDE SEQUENCE [LARGE SCALE GENOMIC DNA]</scope>
    <source>
        <strain>ATCC 17760 / DSM 23089 / LMG 22485 / NCIMB 9086 / R18194 / 383</strain>
    </source>
</reference>
<name>RPOA_BURL3</name>
<feature type="chain" id="PRO_0000225262" description="DNA-directed RNA polymerase subunit alpha">
    <location>
        <begin position="1"/>
        <end position="325"/>
    </location>
</feature>
<feature type="region of interest" description="Alpha N-terminal domain (alpha-NTD)" evidence="1">
    <location>
        <begin position="1"/>
        <end position="231"/>
    </location>
</feature>
<feature type="region of interest" description="Alpha C-terminal domain (alpha-CTD)" evidence="1">
    <location>
        <begin position="246"/>
        <end position="325"/>
    </location>
</feature>
<organism>
    <name type="scientific">Burkholderia lata (strain ATCC 17760 / DSM 23089 / LMG 22485 / NCIMB 9086 / R18194 / 383)</name>
    <dbReference type="NCBI Taxonomy" id="482957"/>
    <lineage>
        <taxon>Bacteria</taxon>
        <taxon>Pseudomonadati</taxon>
        <taxon>Pseudomonadota</taxon>
        <taxon>Betaproteobacteria</taxon>
        <taxon>Burkholderiales</taxon>
        <taxon>Burkholderiaceae</taxon>
        <taxon>Burkholderia</taxon>
        <taxon>Burkholderia cepacia complex</taxon>
    </lineage>
</organism>
<gene>
    <name evidence="1" type="primary">rpoA</name>
    <name type="ordered locus">Bcep18194_A3473</name>
</gene>